<name>TSAD_SYNC1</name>
<accession>Q3A3G6</accession>
<sequence length="342" mass="36299">MLLLTLESSCDETSAAVVRDGRQVLSNVIASQIDVHALYGGVVPELASRKHMEAVAVVVDDALRQARVALGDIEGIAVTRGPGLVGALLVGLSMAKAMAMSLDIPLVGVHHMEGHILAPLLEQDVPFPYLALAVSGGHTHLYRVDGIGRYRIVGRTLDDAAGEAFDKVSKLLGLGYPGGAVIDRLAAEGNPKAFDFPRPLLKKPNFDFSFSGIKTALLYYAQSQKGPIEGDHLRDVAASFQQAVVEVLCKKTLRAARETGLQRIVVAGGVACNKGLRRMMGERSAKEGFQVFFPSPGLCADNAAMLGVAGDAYLAGGCTSDLDLNARSNWPLDQAGWPQPCR</sequence>
<evidence type="ECO:0000255" key="1">
    <source>
        <dbReference type="HAMAP-Rule" id="MF_01445"/>
    </source>
</evidence>
<dbReference type="EC" id="2.3.1.234" evidence="1"/>
<dbReference type="EMBL" id="CP000142">
    <property type="protein sequence ID" value="ABA89091.1"/>
    <property type="molecule type" value="Genomic_DNA"/>
</dbReference>
<dbReference type="RefSeq" id="WP_011341593.1">
    <property type="nucleotide sequence ID" value="NC_007498.2"/>
</dbReference>
<dbReference type="SMR" id="Q3A3G6"/>
<dbReference type="STRING" id="338963.Pcar_1850"/>
<dbReference type="KEGG" id="pca:Pcar_1850"/>
<dbReference type="eggNOG" id="COG0533">
    <property type="taxonomic scope" value="Bacteria"/>
</dbReference>
<dbReference type="HOGENOM" id="CLU_023208_0_2_7"/>
<dbReference type="OrthoDB" id="9806197at2"/>
<dbReference type="Proteomes" id="UP000002534">
    <property type="component" value="Chromosome"/>
</dbReference>
<dbReference type="GO" id="GO:0005737">
    <property type="term" value="C:cytoplasm"/>
    <property type="evidence" value="ECO:0007669"/>
    <property type="project" value="UniProtKB-SubCell"/>
</dbReference>
<dbReference type="GO" id="GO:0005506">
    <property type="term" value="F:iron ion binding"/>
    <property type="evidence" value="ECO:0007669"/>
    <property type="project" value="UniProtKB-UniRule"/>
</dbReference>
<dbReference type="GO" id="GO:0061711">
    <property type="term" value="F:N(6)-L-threonylcarbamoyladenine synthase activity"/>
    <property type="evidence" value="ECO:0007669"/>
    <property type="project" value="UniProtKB-EC"/>
</dbReference>
<dbReference type="GO" id="GO:0002949">
    <property type="term" value="P:tRNA threonylcarbamoyladenosine modification"/>
    <property type="evidence" value="ECO:0007669"/>
    <property type="project" value="UniProtKB-UniRule"/>
</dbReference>
<dbReference type="CDD" id="cd24133">
    <property type="entry name" value="ASKHA_NBD_TsaD_bac"/>
    <property type="match status" value="1"/>
</dbReference>
<dbReference type="FunFam" id="3.30.420.40:FF:000012">
    <property type="entry name" value="tRNA N6-adenosine threonylcarbamoyltransferase"/>
    <property type="match status" value="1"/>
</dbReference>
<dbReference type="FunFam" id="3.30.420.40:FF:000040">
    <property type="entry name" value="tRNA N6-adenosine threonylcarbamoyltransferase"/>
    <property type="match status" value="1"/>
</dbReference>
<dbReference type="Gene3D" id="3.30.420.40">
    <property type="match status" value="2"/>
</dbReference>
<dbReference type="HAMAP" id="MF_01445">
    <property type="entry name" value="TsaD"/>
    <property type="match status" value="1"/>
</dbReference>
<dbReference type="InterPro" id="IPR043129">
    <property type="entry name" value="ATPase_NBD"/>
</dbReference>
<dbReference type="InterPro" id="IPR000905">
    <property type="entry name" value="Gcp-like_dom"/>
</dbReference>
<dbReference type="InterPro" id="IPR017861">
    <property type="entry name" value="KAE1/TsaD"/>
</dbReference>
<dbReference type="InterPro" id="IPR017860">
    <property type="entry name" value="Peptidase_M22_CS"/>
</dbReference>
<dbReference type="InterPro" id="IPR022450">
    <property type="entry name" value="TsaD"/>
</dbReference>
<dbReference type="NCBIfam" id="TIGR00329">
    <property type="entry name" value="gcp_kae1"/>
    <property type="match status" value="1"/>
</dbReference>
<dbReference type="NCBIfam" id="TIGR03723">
    <property type="entry name" value="T6A_TsaD_YgjD"/>
    <property type="match status" value="1"/>
</dbReference>
<dbReference type="PANTHER" id="PTHR11735">
    <property type="entry name" value="TRNA N6-ADENOSINE THREONYLCARBAMOYLTRANSFERASE"/>
    <property type="match status" value="1"/>
</dbReference>
<dbReference type="PANTHER" id="PTHR11735:SF6">
    <property type="entry name" value="TRNA N6-ADENOSINE THREONYLCARBAMOYLTRANSFERASE, MITOCHONDRIAL"/>
    <property type="match status" value="1"/>
</dbReference>
<dbReference type="Pfam" id="PF00814">
    <property type="entry name" value="TsaD"/>
    <property type="match status" value="1"/>
</dbReference>
<dbReference type="PRINTS" id="PR00789">
    <property type="entry name" value="OSIALOPTASE"/>
</dbReference>
<dbReference type="SUPFAM" id="SSF53067">
    <property type="entry name" value="Actin-like ATPase domain"/>
    <property type="match status" value="2"/>
</dbReference>
<dbReference type="PROSITE" id="PS01016">
    <property type="entry name" value="GLYCOPROTEASE"/>
    <property type="match status" value="1"/>
</dbReference>
<protein>
    <recommendedName>
        <fullName evidence="1">tRNA N6-adenosine threonylcarbamoyltransferase</fullName>
        <ecNumber evidence="1">2.3.1.234</ecNumber>
    </recommendedName>
    <alternativeName>
        <fullName evidence="1">N6-L-threonylcarbamoyladenine synthase</fullName>
        <shortName evidence="1">t(6)A synthase</shortName>
    </alternativeName>
    <alternativeName>
        <fullName evidence="1">t(6)A37 threonylcarbamoyladenosine biosynthesis protein TsaD</fullName>
    </alternativeName>
    <alternativeName>
        <fullName evidence="1">tRNA threonylcarbamoyladenosine biosynthesis protein TsaD</fullName>
    </alternativeName>
</protein>
<keyword id="KW-0012">Acyltransferase</keyword>
<keyword id="KW-0963">Cytoplasm</keyword>
<keyword id="KW-0408">Iron</keyword>
<keyword id="KW-0479">Metal-binding</keyword>
<keyword id="KW-1185">Reference proteome</keyword>
<keyword id="KW-0808">Transferase</keyword>
<keyword id="KW-0819">tRNA processing</keyword>
<organism>
    <name type="scientific">Syntrophotalea carbinolica (strain DSM 2380 / NBRC 103641 / GraBd1)</name>
    <name type="common">Pelobacter carbinolicus</name>
    <dbReference type="NCBI Taxonomy" id="338963"/>
    <lineage>
        <taxon>Bacteria</taxon>
        <taxon>Pseudomonadati</taxon>
        <taxon>Thermodesulfobacteriota</taxon>
        <taxon>Desulfuromonadia</taxon>
        <taxon>Desulfuromonadales</taxon>
        <taxon>Syntrophotaleaceae</taxon>
        <taxon>Syntrophotalea</taxon>
    </lineage>
</organism>
<reference key="1">
    <citation type="submission" date="2005-10" db="EMBL/GenBank/DDBJ databases">
        <title>Complete sequence of Pelobacter carbinolicus DSM 2380.</title>
        <authorList>
            <person name="Copeland A."/>
            <person name="Lucas S."/>
            <person name="Lapidus A."/>
            <person name="Barry K."/>
            <person name="Detter J.C."/>
            <person name="Glavina T."/>
            <person name="Hammon N."/>
            <person name="Israni S."/>
            <person name="Pitluck S."/>
            <person name="Chertkov O."/>
            <person name="Schmutz J."/>
            <person name="Larimer F."/>
            <person name="Land M."/>
            <person name="Kyrpides N."/>
            <person name="Ivanova N."/>
            <person name="Richardson P."/>
        </authorList>
    </citation>
    <scope>NUCLEOTIDE SEQUENCE [LARGE SCALE GENOMIC DNA]</scope>
    <source>
        <strain>DSM 2380 / NBRC 103641 / GraBd1</strain>
    </source>
</reference>
<proteinExistence type="inferred from homology"/>
<comment type="function">
    <text evidence="1">Required for the formation of a threonylcarbamoyl group on adenosine at position 37 (t(6)A37) in tRNAs that read codons beginning with adenine. Is involved in the transfer of the threonylcarbamoyl moiety of threonylcarbamoyl-AMP (TC-AMP) to the N6 group of A37, together with TsaE and TsaB. TsaD likely plays a direct catalytic role in this reaction.</text>
</comment>
<comment type="catalytic activity">
    <reaction evidence="1">
        <text>L-threonylcarbamoyladenylate + adenosine(37) in tRNA = N(6)-L-threonylcarbamoyladenosine(37) in tRNA + AMP + H(+)</text>
        <dbReference type="Rhea" id="RHEA:37059"/>
        <dbReference type="Rhea" id="RHEA-COMP:10162"/>
        <dbReference type="Rhea" id="RHEA-COMP:10163"/>
        <dbReference type="ChEBI" id="CHEBI:15378"/>
        <dbReference type="ChEBI" id="CHEBI:73682"/>
        <dbReference type="ChEBI" id="CHEBI:74411"/>
        <dbReference type="ChEBI" id="CHEBI:74418"/>
        <dbReference type="ChEBI" id="CHEBI:456215"/>
        <dbReference type="EC" id="2.3.1.234"/>
    </reaction>
</comment>
<comment type="cofactor">
    <cofactor evidence="1">
        <name>Fe(2+)</name>
        <dbReference type="ChEBI" id="CHEBI:29033"/>
    </cofactor>
    <text evidence="1">Binds 1 Fe(2+) ion per subunit.</text>
</comment>
<comment type="subcellular location">
    <subcellularLocation>
        <location evidence="1">Cytoplasm</location>
    </subcellularLocation>
</comment>
<comment type="similarity">
    <text evidence="1">Belongs to the KAE1 / TsaD family.</text>
</comment>
<gene>
    <name evidence="1" type="primary">tsaD</name>
    <name type="synonym">gcp</name>
    <name type="ordered locus">Pcar_1850</name>
</gene>
<feature type="chain" id="PRO_0000303469" description="tRNA N6-adenosine threonylcarbamoyltransferase">
    <location>
        <begin position="1"/>
        <end position="342"/>
    </location>
</feature>
<feature type="binding site" evidence="1">
    <location>
        <position position="111"/>
    </location>
    <ligand>
        <name>Fe cation</name>
        <dbReference type="ChEBI" id="CHEBI:24875"/>
    </ligand>
</feature>
<feature type="binding site" evidence="1">
    <location>
        <position position="115"/>
    </location>
    <ligand>
        <name>Fe cation</name>
        <dbReference type="ChEBI" id="CHEBI:24875"/>
    </ligand>
</feature>
<feature type="binding site" evidence="1">
    <location>
        <begin position="133"/>
        <end position="137"/>
    </location>
    <ligand>
        <name>substrate</name>
    </ligand>
</feature>
<feature type="binding site" evidence="1">
    <location>
        <position position="166"/>
    </location>
    <ligand>
        <name>substrate</name>
    </ligand>
</feature>
<feature type="binding site" evidence="1">
    <location>
        <position position="179"/>
    </location>
    <ligand>
        <name>substrate</name>
    </ligand>
</feature>
<feature type="binding site" evidence="1">
    <location>
        <position position="183"/>
    </location>
    <ligand>
        <name>substrate</name>
    </ligand>
</feature>
<feature type="binding site" evidence="1">
    <location>
        <position position="273"/>
    </location>
    <ligand>
        <name>substrate</name>
    </ligand>
</feature>
<feature type="binding site" evidence="1">
    <location>
        <position position="301"/>
    </location>
    <ligand>
        <name>Fe cation</name>
        <dbReference type="ChEBI" id="CHEBI:24875"/>
    </ligand>
</feature>